<organism>
    <name type="scientific">Afipia carboxidovorans (strain ATCC 49405 / DSM 1227 / KCTC 32145 / OM5)</name>
    <name type="common">Oligotropha carboxidovorans</name>
    <dbReference type="NCBI Taxonomy" id="504832"/>
    <lineage>
        <taxon>Bacteria</taxon>
        <taxon>Pseudomonadati</taxon>
        <taxon>Pseudomonadota</taxon>
        <taxon>Alphaproteobacteria</taxon>
        <taxon>Hyphomicrobiales</taxon>
        <taxon>Nitrobacteraceae</taxon>
        <taxon>Afipia</taxon>
    </lineage>
</organism>
<comment type="function">
    <text evidence="1">Catalyzes the isomerization between 2-isopropylmalate and 3-isopropylmalate, via the formation of 2-isopropylmaleate.</text>
</comment>
<comment type="catalytic activity">
    <reaction evidence="1">
        <text>(2R,3S)-3-isopropylmalate = (2S)-2-isopropylmalate</text>
        <dbReference type="Rhea" id="RHEA:32287"/>
        <dbReference type="ChEBI" id="CHEBI:1178"/>
        <dbReference type="ChEBI" id="CHEBI:35121"/>
        <dbReference type="EC" id="4.2.1.33"/>
    </reaction>
</comment>
<comment type="cofactor">
    <cofactor evidence="1">
        <name>[4Fe-4S] cluster</name>
        <dbReference type="ChEBI" id="CHEBI:49883"/>
    </cofactor>
    <text evidence="1">Binds 1 [4Fe-4S] cluster per subunit.</text>
</comment>
<comment type="pathway">
    <text evidence="1">Amino-acid biosynthesis; L-leucine biosynthesis; L-leucine from 3-methyl-2-oxobutanoate: step 2/4.</text>
</comment>
<comment type="subunit">
    <text evidence="1">Heterodimer of LeuC and LeuD.</text>
</comment>
<comment type="similarity">
    <text evidence="1">Belongs to the aconitase/IPM isomerase family. LeuC type 1 subfamily.</text>
</comment>
<name>LEUC_AFIC5</name>
<sequence>MAKPTTLYDKIWNDHLVDEQPDGTCLLYIDRHLVHEVTSPQAFEGLRVAGRKVHAPEKTLAVVDHNVPTTDRSKPNPDPESAEQIAALATNARDFGVQYFNEFDKRQGIVHVIGPEQGFTLPGTTIVCGDSHTSTHGAFGALAHGIGTSEVEHVLATQTLIQKKAKNMRAVVDGKLPDGVTAKDIILAIIGEIGTAGGTGYVLEYAGEAIRALTMEGRMTICNMSIEGGARAGLVAPDEKAYEFLKGRPLTPKGANWEQAVRYWDTLRSDDNAHFDHEIRLDAANLPPIVTWGTSPEDVVSVAGFVPDPAKIEDEAKRLSKERALAYMGLNAGTKITDIKLDRVFIGSCTNGRIEDLRAAAKVINGHTVNGHVNAMVVPGSGLVKEQAEAEGLDKIFIKAGFEWREPGCSMCLAMNPDKLAPEERCASTSNRNFEGRQGFKGRTHLVSPAMAAAAAIAGHFVDIRDWKAA</sequence>
<gene>
    <name evidence="1" type="primary">leuC</name>
    <name type="ordered locus">OCAR_4273</name>
    <name type="ordered locus">OCA5_c02460</name>
</gene>
<proteinExistence type="inferred from homology"/>
<keyword id="KW-0004">4Fe-4S</keyword>
<keyword id="KW-0028">Amino-acid biosynthesis</keyword>
<keyword id="KW-0100">Branched-chain amino acid biosynthesis</keyword>
<keyword id="KW-0408">Iron</keyword>
<keyword id="KW-0411">Iron-sulfur</keyword>
<keyword id="KW-0432">Leucine biosynthesis</keyword>
<keyword id="KW-0456">Lyase</keyword>
<keyword id="KW-0479">Metal-binding</keyword>
<keyword id="KW-1185">Reference proteome</keyword>
<accession>B6JAQ9</accession>
<accession>F8BTD0</accession>
<evidence type="ECO:0000255" key="1">
    <source>
        <dbReference type="HAMAP-Rule" id="MF_01026"/>
    </source>
</evidence>
<reference key="1">
    <citation type="journal article" date="2008" name="J. Bacteriol.">
        <title>Genome sequence of the chemolithoautotrophic bacterium Oligotropha carboxidovorans OM5T.</title>
        <authorList>
            <person name="Paul D."/>
            <person name="Bridges S."/>
            <person name="Burgess S.C."/>
            <person name="Dandass Y."/>
            <person name="Lawrence M.L."/>
        </authorList>
    </citation>
    <scope>NUCLEOTIDE SEQUENCE [LARGE SCALE GENOMIC DNA]</scope>
    <source>
        <strain>ATCC 49405 / DSM 1227 / KCTC 32145 / OM5</strain>
    </source>
</reference>
<reference key="2">
    <citation type="journal article" date="2011" name="J. Bacteriol.">
        <title>Complete genome sequences of the chemolithoautotrophic Oligotropha carboxidovorans strains OM4 and OM5.</title>
        <authorList>
            <person name="Volland S."/>
            <person name="Rachinger M."/>
            <person name="Strittmatter A."/>
            <person name="Daniel R."/>
            <person name="Gottschalk G."/>
            <person name="Meyer O."/>
        </authorList>
    </citation>
    <scope>NUCLEOTIDE SEQUENCE [LARGE SCALE GENOMIC DNA]</scope>
    <source>
        <strain>ATCC 49405 / DSM 1227 / KCTC 32145 / OM5</strain>
    </source>
</reference>
<dbReference type="EC" id="4.2.1.33" evidence="1"/>
<dbReference type="EMBL" id="CP001196">
    <property type="protein sequence ID" value="ACI91422.1"/>
    <property type="molecule type" value="Genomic_DNA"/>
</dbReference>
<dbReference type="EMBL" id="CP002826">
    <property type="protein sequence ID" value="AEI04975.1"/>
    <property type="molecule type" value="Genomic_DNA"/>
</dbReference>
<dbReference type="RefSeq" id="WP_012561453.1">
    <property type="nucleotide sequence ID" value="NC_015684.1"/>
</dbReference>
<dbReference type="SMR" id="B6JAQ9"/>
<dbReference type="STRING" id="504832.OCA5_c02460"/>
<dbReference type="KEGG" id="oca:OCAR_4273"/>
<dbReference type="KEGG" id="ocg:OCA5_c02460"/>
<dbReference type="PATRIC" id="fig|504832.7.peg.261"/>
<dbReference type="eggNOG" id="COG0065">
    <property type="taxonomic scope" value="Bacteria"/>
</dbReference>
<dbReference type="HOGENOM" id="CLU_006714_3_4_5"/>
<dbReference type="OrthoDB" id="9802769at2"/>
<dbReference type="UniPathway" id="UPA00048">
    <property type="reaction ID" value="UER00071"/>
</dbReference>
<dbReference type="Proteomes" id="UP000007730">
    <property type="component" value="Chromosome"/>
</dbReference>
<dbReference type="GO" id="GO:0003861">
    <property type="term" value="F:3-isopropylmalate dehydratase activity"/>
    <property type="evidence" value="ECO:0007669"/>
    <property type="project" value="UniProtKB-UniRule"/>
</dbReference>
<dbReference type="GO" id="GO:0051539">
    <property type="term" value="F:4 iron, 4 sulfur cluster binding"/>
    <property type="evidence" value="ECO:0007669"/>
    <property type="project" value="UniProtKB-KW"/>
</dbReference>
<dbReference type="GO" id="GO:0046872">
    <property type="term" value="F:metal ion binding"/>
    <property type="evidence" value="ECO:0007669"/>
    <property type="project" value="UniProtKB-KW"/>
</dbReference>
<dbReference type="GO" id="GO:0009098">
    <property type="term" value="P:L-leucine biosynthetic process"/>
    <property type="evidence" value="ECO:0007669"/>
    <property type="project" value="UniProtKB-UniRule"/>
</dbReference>
<dbReference type="CDD" id="cd01583">
    <property type="entry name" value="IPMI"/>
    <property type="match status" value="1"/>
</dbReference>
<dbReference type="FunFam" id="3.30.499.10:FF:000007">
    <property type="entry name" value="3-isopropylmalate dehydratase large subunit"/>
    <property type="match status" value="1"/>
</dbReference>
<dbReference type="Gene3D" id="3.30.499.10">
    <property type="entry name" value="Aconitase, domain 3"/>
    <property type="match status" value="2"/>
</dbReference>
<dbReference type="HAMAP" id="MF_01026">
    <property type="entry name" value="LeuC_type1"/>
    <property type="match status" value="1"/>
</dbReference>
<dbReference type="InterPro" id="IPR004430">
    <property type="entry name" value="3-IsopropMal_deHydase_lsu"/>
</dbReference>
<dbReference type="InterPro" id="IPR015931">
    <property type="entry name" value="Acnase/IPM_dHydase_lsu_aba_1/3"/>
</dbReference>
<dbReference type="InterPro" id="IPR001030">
    <property type="entry name" value="Acoase/IPM_deHydtase_lsu_aba"/>
</dbReference>
<dbReference type="InterPro" id="IPR018136">
    <property type="entry name" value="Aconitase_4Fe-4S_BS"/>
</dbReference>
<dbReference type="InterPro" id="IPR036008">
    <property type="entry name" value="Aconitase_4Fe-4S_dom"/>
</dbReference>
<dbReference type="InterPro" id="IPR050067">
    <property type="entry name" value="IPM_dehydratase_rel_enz"/>
</dbReference>
<dbReference type="InterPro" id="IPR033941">
    <property type="entry name" value="IPMI_cat"/>
</dbReference>
<dbReference type="NCBIfam" id="TIGR00170">
    <property type="entry name" value="leuC"/>
    <property type="match status" value="1"/>
</dbReference>
<dbReference type="NCBIfam" id="NF004016">
    <property type="entry name" value="PRK05478.1"/>
    <property type="match status" value="1"/>
</dbReference>
<dbReference type="NCBIfam" id="NF009116">
    <property type="entry name" value="PRK12466.1"/>
    <property type="match status" value="1"/>
</dbReference>
<dbReference type="PANTHER" id="PTHR43822:SF9">
    <property type="entry name" value="3-ISOPROPYLMALATE DEHYDRATASE"/>
    <property type="match status" value="1"/>
</dbReference>
<dbReference type="PANTHER" id="PTHR43822">
    <property type="entry name" value="HOMOACONITASE, MITOCHONDRIAL-RELATED"/>
    <property type="match status" value="1"/>
</dbReference>
<dbReference type="Pfam" id="PF00330">
    <property type="entry name" value="Aconitase"/>
    <property type="match status" value="1"/>
</dbReference>
<dbReference type="PRINTS" id="PR00415">
    <property type="entry name" value="ACONITASE"/>
</dbReference>
<dbReference type="SUPFAM" id="SSF53732">
    <property type="entry name" value="Aconitase iron-sulfur domain"/>
    <property type="match status" value="1"/>
</dbReference>
<dbReference type="PROSITE" id="PS00450">
    <property type="entry name" value="ACONITASE_1"/>
    <property type="match status" value="1"/>
</dbReference>
<dbReference type="PROSITE" id="PS01244">
    <property type="entry name" value="ACONITASE_2"/>
    <property type="match status" value="1"/>
</dbReference>
<protein>
    <recommendedName>
        <fullName evidence="1">3-isopropylmalate dehydratase large subunit</fullName>
        <ecNumber evidence="1">4.2.1.33</ecNumber>
    </recommendedName>
    <alternativeName>
        <fullName evidence="1">Alpha-IPM isomerase</fullName>
        <shortName evidence="1">IPMI</shortName>
    </alternativeName>
    <alternativeName>
        <fullName evidence="1">Isopropylmalate isomerase</fullName>
    </alternativeName>
</protein>
<feature type="chain" id="PRO_1000135699" description="3-isopropylmalate dehydratase large subunit">
    <location>
        <begin position="1"/>
        <end position="470"/>
    </location>
</feature>
<feature type="binding site" evidence="1">
    <location>
        <position position="349"/>
    </location>
    <ligand>
        <name>[4Fe-4S] cluster</name>
        <dbReference type="ChEBI" id="CHEBI:49883"/>
    </ligand>
</feature>
<feature type="binding site" evidence="1">
    <location>
        <position position="409"/>
    </location>
    <ligand>
        <name>[4Fe-4S] cluster</name>
        <dbReference type="ChEBI" id="CHEBI:49883"/>
    </ligand>
</feature>
<feature type="binding site" evidence="1">
    <location>
        <position position="412"/>
    </location>
    <ligand>
        <name>[4Fe-4S] cluster</name>
        <dbReference type="ChEBI" id="CHEBI:49883"/>
    </ligand>
</feature>